<dbReference type="EMBL" id="AJ428413">
    <property type="protein sequence ID" value="CAD28710.1"/>
    <property type="molecule type" value="Genomic_DNA"/>
</dbReference>
<dbReference type="RefSeq" id="NP_862743.1">
    <property type="nucleotide sequence ID" value="NC_004993.1"/>
</dbReference>
<dbReference type="SMR" id="Q7YJY1"/>
<dbReference type="GeneID" id="2598043"/>
<dbReference type="GO" id="GO:0009507">
    <property type="term" value="C:chloroplast"/>
    <property type="evidence" value="ECO:0007669"/>
    <property type="project" value="UniProtKB-SubCell"/>
</dbReference>
<dbReference type="GO" id="GO:0005763">
    <property type="term" value="C:mitochondrial small ribosomal subunit"/>
    <property type="evidence" value="ECO:0007669"/>
    <property type="project" value="TreeGrafter"/>
</dbReference>
<dbReference type="GO" id="GO:0003735">
    <property type="term" value="F:structural constituent of ribosome"/>
    <property type="evidence" value="ECO:0007669"/>
    <property type="project" value="InterPro"/>
</dbReference>
<dbReference type="GO" id="GO:0006412">
    <property type="term" value="P:translation"/>
    <property type="evidence" value="ECO:0007669"/>
    <property type="project" value="UniProtKB-UniRule"/>
</dbReference>
<dbReference type="CDD" id="cd01425">
    <property type="entry name" value="RPS2"/>
    <property type="match status" value="1"/>
</dbReference>
<dbReference type="FunFam" id="3.40.50.10490:FF:000101">
    <property type="match status" value="1"/>
</dbReference>
<dbReference type="FunFam" id="1.10.287.610:FF:000001">
    <property type="entry name" value="30S ribosomal protein S2"/>
    <property type="match status" value="1"/>
</dbReference>
<dbReference type="Gene3D" id="3.40.50.10490">
    <property type="entry name" value="Glucose-6-phosphate isomerase like protein, domain 1"/>
    <property type="match status" value="1"/>
</dbReference>
<dbReference type="Gene3D" id="1.10.287.610">
    <property type="entry name" value="Helix hairpin bin"/>
    <property type="match status" value="1"/>
</dbReference>
<dbReference type="HAMAP" id="MF_00291_B">
    <property type="entry name" value="Ribosomal_uS2_B"/>
    <property type="match status" value="1"/>
</dbReference>
<dbReference type="InterPro" id="IPR001865">
    <property type="entry name" value="Ribosomal_uS2"/>
</dbReference>
<dbReference type="InterPro" id="IPR005706">
    <property type="entry name" value="Ribosomal_uS2_bac/mit/plastid"/>
</dbReference>
<dbReference type="InterPro" id="IPR018130">
    <property type="entry name" value="Ribosomal_uS2_CS"/>
</dbReference>
<dbReference type="InterPro" id="IPR023591">
    <property type="entry name" value="Ribosomal_uS2_flav_dom_sf"/>
</dbReference>
<dbReference type="NCBIfam" id="TIGR01011">
    <property type="entry name" value="rpsB_bact"/>
    <property type="match status" value="1"/>
</dbReference>
<dbReference type="PANTHER" id="PTHR12534">
    <property type="entry name" value="30S RIBOSOMAL PROTEIN S2 PROKARYOTIC AND ORGANELLAR"/>
    <property type="match status" value="1"/>
</dbReference>
<dbReference type="PANTHER" id="PTHR12534:SF0">
    <property type="entry name" value="SMALL RIBOSOMAL SUBUNIT PROTEIN US2M"/>
    <property type="match status" value="1"/>
</dbReference>
<dbReference type="Pfam" id="PF00318">
    <property type="entry name" value="Ribosomal_S2"/>
    <property type="match status" value="1"/>
</dbReference>
<dbReference type="PRINTS" id="PR00395">
    <property type="entry name" value="RIBOSOMALS2"/>
</dbReference>
<dbReference type="SUPFAM" id="SSF52313">
    <property type="entry name" value="Ribosomal protein S2"/>
    <property type="match status" value="1"/>
</dbReference>
<dbReference type="PROSITE" id="PS00962">
    <property type="entry name" value="RIBOSOMAL_S2_1"/>
    <property type="match status" value="1"/>
</dbReference>
<dbReference type="PROSITE" id="PS00963">
    <property type="entry name" value="RIBOSOMAL_S2_2"/>
    <property type="match status" value="1"/>
</dbReference>
<comment type="subcellular location">
    <subcellularLocation>
        <location>Plastid</location>
        <location>Chloroplast</location>
    </subcellularLocation>
</comment>
<comment type="similarity">
    <text evidence="1">Belongs to the universal ribosomal protein uS2 family.</text>
</comment>
<feature type="chain" id="PRO_0000352096" description="Small ribosomal subunit protein uS2c">
    <location>
        <begin position="1"/>
        <end position="236"/>
    </location>
</feature>
<protein>
    <recommendedName>
        <fullName evidence="1">Small ribosomal subunit protein uS2c</fullName>
    </recommendedName>
    <alternativeName>
        <fullName>30S ribosomal protein S2, chloroplastic</fullName>
    </alternativeName>
</protein>
<proteinExistence type="inferred from homology"/>
<gene>
    <name type="primary">rps2</name>
</gene>
<organism>
    <name type="scientific">Calycanthus floridus var. glaucus</name>
    <name type="common">Eastern sweetshrub</name>
    <name type="synonym">Calycanthus fertilis var. ferax</name>
    <dbReference type="NCBI Taxonomy" id="212734"/>
    <lineage>
        <taxon>Eukaryota</taxon>
        <taxon>Viridiplantae</taxon>
        <taxon>Streptophyta</taxon>
        <taxon>Embryophyta</taxon>
        <taxon>Tracheophyta</taxon>
        <taxon>Spermatophyta</taxon>
        <taxon>Magnoliopsida</taxon>
        <taxon>Magnoliidae</taxon>
        <taxon>Laurales</taxon>
        <taxon>Calycanthaceae</taxon>
        <taxon>Calycanthus</taxon>
    </lineage>
</organism>
<accession>Q7YJY1</accession>
<keyword id="KW-0150">Chloroplast</keyword>
<keyword id="KW-0934">Plastid</keyword>
<keyword id="KW-0687">Ribonucleoprotein</keyword>
<keyword id="KW-0689">Ribosomal protein</keyword>
<reference key="1">
    <citation type="journal article" date="2003" name="Plant Syst. Evol.">
        <title>The chloroplast genome of the 'basal' angiosperm Calycanthus fertilis -- structural and phylogenetic analyses.</title>
        <authorList>
            <person name="Goremykin V."/>
            <person name="Hirsch-Ernst K.I."/>
            <person name="Woelfl S."/>
            <person name="Hellwig F.H."/>
        </authorList>
    </citation>
    <scope>NUCLEOTIDE SEQUENCE [LARGE SCALE GENOMIC DNA]</scope>
</reference>
<sequence>MTRRYWHINLEEMMEAGVHFGHGTRKWNPRMAPYISAKRKGIHITNLTRTARFLSEACDLVFDAASIGKHFLIVGTKKKAADSVASAAIRARCHYVNKKWLGGMSTNWSTTETRLHKFRDLRAEQKAGKLNRLPKRDAAMLKRQLSHLQTYLGGIKYMTGLPDIVIIIDQQEEYTALRECLTLGIPTICLIDTNCDPDLADISIPANDDAIASIRLILNKLVSAICEGRSSYIRNC</sequence>
<name>RR2_CALFG</name>
<evidence type="ECO:0000305" key="1"/>
<geneLocation type="chloroplast"/>